<organism>
    <name type="scientific">Saccharomyces cerevisiae (strain ATCC 204508 / S288c)</name>
    <name type="common">Baker's yeast</name>
    <dbReference type="NCBI Taxonomy" id="559292"/>
    <lineage>
        <taxon>Eukaryota</taxon>
        <taxon>Fungi</taxon>
        <taxon>Dikarya</taxon>
        <taxon>Ascomycota</taxon>
        <taxon>Saccharomycotina</taxon>
        <taxon>Saccharomycetes</taxon>
        <taxon>Saccharomycetales</taxon>
        <taxon>Saccharomycetaceae</taxon>
        <taxon>Saccharomyces</taxon>
    </lineage>
</organism>
<gene>
    <name type="ordered locus">YDR476C</name>
</gene>
<protein>
    <recommendedName>
        <fullName>Uncharacterized protein YDR476C</fullName>
    </recommendedName>
</protein>
<comment type="subcellular location">
    <subcellularLocation>
        <location evidence="2">Endoplasmic reticulum</location>
    </subcellularLocation>
</comment>
<comment type="miscellaneous">
    <text evidence="3">Present with 2120 molecules/cell in log phase SD medium.</text>
</comment>
<feature type="chain" id="PRO_0000253853" description="Uncharacterized protein YDR476C">
    <location>
        <begin position="1"/>
        <end position="224"/>
    </location>
</feature>
<feature type="glycosylation site" description="N-linked (GlcNAc...) asparagine" evidence="1">
    <location>
        <position position="10"/>
    </location>
</feature>
<feature type="glycosylation site" description="N-linked (GlcNAc...) asparagine" evidence="1">
    <location>
        <position position="70"/>
    </location>
</feature>
<feature type="glycosylation site" description="N-linked (GlcNAc...) asparagine" evidence="1">
    <location>
        <position position="74"/>
    </location>
</feature>
<accession>Q03362</accession>
<accession>D6VT99</accession>
<keyword id="KW-0256">Endoplasmic reticulum</keyword>
<keyword id="KW-0325">Glycoprotein</keyword>
<keyword id="KW-1185">Reference proteome</keyword>
<name>YD476_YEAST</name>
<evidence type="ECO:0000255" key="1"/>
<evidence type="ECO:0000269" key="2">
    <source>
    </source>
</evidence>
<evidence type="ECO:0000269" key="3">
    <source>
    </source>
</evidence>
<reference key="1">
    <citation type="journal article" date="1997" name="Nature">
        <title>The nucleotide sequence of Saccharomyces cerevisiae chromosome IV.</title>
        <authorList>
            <person name="Jacq C."/>
            <person name="Alt-Moerbe J."/>
            <person name="Andre B."/>
            <person name="Arnold W."/>
            <person name="Bahr A."/>
            <person name="Ballesta J.P.G."/>
            <person name="Bargues M."/>
            <person name="Baron L."/>
            <person name="Becker A."/>
            <person name="Biteau N."/>
            <person name="Bloecker H."/>
            <person name="Blugeon C."/>
            <person name="Boskovic J."/>
            <person name="Brandt P."/>
            <person name="Brueckner M."/>
            <person name="Buitrago M.J."/>
            <person name="Coster F."/>
            <person name="Delaveau T."/>
            <person name="del Rey F."/>
            <person name="Dujon B."/>
            <person name="Eide L.G."/>
            <person name="Garcia-Cantalejo J.M."/>
            <person name="Goffeau A."/>
            <person name="Gomez-Peris A."/>
            <person name="Granotier C."/>
            <person name="Hanemann V."/>
            <person name="Hankeln T."/>
            <person name="Hoheisel J.D."/>
            <person name="Jaeger W."/>
            <person name="Jimenez A."/>
            <person name="Jonniaux J.-L."/>
            <person name="Kraemer C."/>
            <person name="Kuester H."/>
            <person name="Laamanen P."/>
            <person name="Legros Y."/>
            <person name="Louis E.J."/>
            <person name="Moeller-Rieker S."/>
            <person name="Monnet A."/>
            <person name="Moro M."/>
            <person name="Mueller-Auer S."/>
            <person name="Nussbaumer B."/>
            <person name="Paricio N."/>
            <person name="Paulin L."/>
            <person name="Perea J."/>
            <person name="Perez-Alonso M."/>
            <person name="Perez-Ortin J.E."/>
            <person name="Pohl T.M."/>
            <person name="Prydz H."/>
            <person name="Purnelle B."/>
            <person name="Rasmussen S.W."/>
            <person name="Remacha M.A."/>
            <person name="Revuelta J.L."/>
            <person name="Rieger M."/>
            <person name="Salom D."/>
            <person name="Saluz H.P."/>
            <person name="Saiz J.E."/>
            <person name="Saren A.-M."/>
            <person name="Schaefer M."/>
            <person name="Scharfe M."/>
            <person name="Schmidt E.R."/>
            <person name="Schneider C."/>
            <person name="Scholler P."/>
            <person name="Schwarz S."/>
            <person name="Soler-Mira A."/>
            <person name="Urrestarazu L.A."/>
            <person name="Verhasselt P."/>
            <person name="Vissers S."/>
            <person name="Voet M."/>
            <person name="Volckaert G."/>
            <person name="Wagner G."/>
            <person name="Wambutt R."/>
            <person name="Wedler E."/>
            <person name="Wedler H."/>
            <person name="Woelfl S."/>
            <person name="Harris D.E."/>
            <person name="Bowman S."/>
            <person name="Brown D."/>
            <person name="Churcher C.M."/>
            <person name="Connor R."/>
            <person name="Dedman K."/>
            <person name="Gentles S."/>
            <person name="Hamlin N."/>
            <person name="Hunt S."/>
            <person name="Jones L."/>
            <person name="McDonald S."/>
            <person name="Murphy L.D."/>
            <person name="Niblett D."/>
            <person name="Odell C."/>
            <person name="Oliver K."/>
            <person name="Rajandream M.A."/>
            <person name="Richards C."/>
            <person name="Shore L."/>
            <person name="Walsh S.V."/>
            <person name="Barrell B.G."/>
            <person name="Dietrich F.S."/>
            <person name="Mulligan J.T."/>
            <person name="Allen E."/>
            <person name="Araujo R."/>
            <person name="Aviles E."/>
            <person name="Berno A."/>
            <person name="Carpenter J."/>
            <person name="Chen E."/>
            <person name="Cherry J.M."/>
            <person name="Chung E."/>
            <person name="Duncan M."/>
            <person name="Hunicke-Smith S."/>
            <person name="Hyman R.W."/>
            <person name="Komp C."/>
            <person name="Lashkari D."/>
            <person name="Lew H."/>
            <person name="Lin D."/>
            <person name="Mosedale D."/>
            <person name="Nakahara K."/>
            <person name="Namath A."/>
            <person name="Oefner P."/>
            <person name="Oh C."/>
            <person name="Petel F.X."/>
            <person name="Roberts D."/>
            <person name="Schramm S."/>
            <person name="Schroeder M."/>
            <person name="Shogren T."/>
            <person name="Shroff N."/>
            <person name="Winant A."/>
            <person name="Yelton M.A."/>
            <person name="Botstein D."/>
            <person name="Davis R.W."/>
            <person name="Johnston M."/>
            <person name="Andrews S."/>
            <person name="Brinkman R."/>
            <person name="Cooper J."/>
            <person name="Ding H."/>
            <person name="Du Z."/>
            <person name="Favello A."/>
            <person name="Fulton L."/>
            <person name="Gattung S."/>
            <person name="Greco T."/>
            <person name="Hallsworth K."/>
            <person name="Hawkins J."/>
            <person name="Hillier L.W."/>
            <person name="Jier M."/>
            <person name="Johnson D."/>
            <person name="Johnston L."/>
            <person name="Kirsten J."/>
            <person name="Kucaba T."/>
            <person name="Langston Y."/>
            <person name="Latreille P."/>
            <person name="Le T."/>
            <person name="Mardis E."/>
            <person name="Menezes S."/>
            <person name="Miller N."/>
            <person name="Nhan M."/>
            <person name="Pauley A."/>
            <person name="Peluso D."/>
            <person name="Rifkin L."/>
            <person name="Riles L."/>
            <person name="Taich A."/>
            <person name="Trevaskis E."/>
            <person name="Vignati D."/>
            <person name="Wilcox L."/>
            <person name="Wohldman P."/>
            <person name="Vaudin M."/>
            <person name="Wilson R."/>
            <person name="Waterston R."/>
            <person name="Albermann K."/>
            <person name="Hani J."/>
            <person name="Heumann K."/>
            <person name="Kleine K."/>
            <person name="Mewes H.-W."/>
            <person name="Zollner A."/>
            <person name="Zaccaria P."/>
        </authorList>
    </citation>
    <scope>NUCLEOTIDE SEQUENCE [LARGE SCALE GENOMIC DNA]</scope>
    <source>
        <strain>ATCC 204508 / S288c</strain>
    </source>
</reference>
<reference key="2">
    <citation type="journal article" date="2014" name="G3 (Bethesda)">
        <title>The reference genome sequence of Saccharomyces cerevisiae: Then and now.</title>
        <authorList>
            <person name="Engel S.R."/>
            <person name="Dietrich F.S."/>
            <person name="Fisk D.G."/>
            <person name="Binkley G."/>
            <person name="Balakrishnan R."/>
            <person name="Costanzo M.C."/>
            <person name="Dwight S.S."/>
            <person name="Hitz B.C."/>
            <person name="Karra K."/>
            <person name="Nash R.S."/>
            <person name="Weng S."/>
            <person name="Wong E.D."/>
            <person name="Lloyd P."/>
            <person name="Skrzypek M.S."/>
            <person name="Miyasato S.R."/>
            <person name="Simison M."/>
            <person name="Cherry J.M."/>
        </authorList>
    </citation>
    <scope>GENOME REANNOTATION</scope>
    <source>
        <strain>ATCC 204508 / S288c</strain>
    </source>
</reference>
<reference key="3">
    <citation type="journal article" date="2007" name="Genome Res.">
        <title>Approaching a complete repository of sequence-verified protein-encoding clones for Saccharomyces cerevisiae.</title>
        <authorList>
            <person name="Hu Y."/>
            <person name="Rolfs A."/>
            <person name="Bhullar B."/>
            <person name="Murthy T.V.S."/>
            <person name="Zhu C."/>
            <person name="Berger M.F."/>
            <person name="Camargo A.A."/>
            <person name="Kelley F."/>
            <person name="McCarron S."/>
            <person name="Jepson D."/>
            <person name="Richardson A."/>
            <person name="Raphael J."/>
            <person name="Moreira D."/>
            <person name="Taycher E."/>
            <person name="Zuo D."/>
            <person name="Mohr S."/>
            <person name="Kane M.F."/>
            <person name="Williamson J."/>
            <person name="Simpson A.J.G."/>
            <person name="Bulyk M.L."/>
            <person name="Harlow E."/>
            <person name="Marsischky G."/>
            <person name="Kolodner R.D."/>
            <person name="LaBaer J."/>
        </authorList>
    </citation>
    <scope>NUCLEOTIDE SEQUENCE [GENOMIC DNA]</scope>
    <source>
        <strain>ATCC 204508 / S288c</strain>
    </source>
</reference>
<reference key="4">
    <citation type="journal article" date="2003" name="Nature">
        <title>Global analysis of protein localization in budding yeast.</title>
        <authorList>
            <person name="Huh W.-K."/>
            <person name="Falvo J.V."/>
            <person name="Gerke L.C."/>
            <person name="Carroll A.S."/>
            <person name="Howson R.W."/>
            <person name="Weissman J.S."/>
            <person name="O'Shea E.K."/>
        </authorList>
    </citation>
    <scope>SUBCELLULAR LOCATION [LARGE SCALE ANALYSIS]</scope>
</reference>
<reference key="5">
    <citation type="journal article" date="2003" name="Nature">
        <title>Global analysis of protein expression in yeast.</title>
        <authorList>
            <person name="Ghaemmaghami S."/>
            <person name="Huh W.-K."/>
            <person name="Bower K."/>
            <person name="Howson R.W."/>
            <person name="Belle A."/>
            <person name="Dephoure N."/>
            <person name="O'Shea E.K."/>
            <person name="Weissman J.S."/>
        </authorList>
    </citation>
    <scope>LEVEL OF PROTEIN EXPRESSION [LARGE SCALE ANALYSIS]</scope>
</reference>
<proteinExistence type="evidence at protein level"/>
<sequence>MWDSLIVSINDTHKLGLEDCLAVFGHVPITKAVKHVRLTEIDTQTSTFTLKFLHTETGQNIEKIIYFIDNDTGNDTRTATGIKQIFNKMFRIAAEKRKLSLIQIDTVEYPCTLVDLLILVGVALPPLCYLYRPALHAIFFLVPNPVGSTLEAWLDSDLVLRLIIVAEFLTHALETLIFVVPRLKYYRVPGEFVPEWLLLGLLEGYGPARRLDTKARTLGEGSVN</sequence>
<dbReference type="EMBL" id="U33050">
    <property type="protein sequence ID" value="AAB64931.1"/>
    <property type="molecule type" value="Genomic_DNA"/>
</dbReference>
<dbReference type="EMBL" id="AY558172">
    <property type="protein sequence ID" value="AAS56498.1"/>
    <property type="molecule type" value="Genomic_DNA"/>
</dbReference>
<dbReference type="EMBL" id="BK006938">
    <property type="protein sequence ID" value="DAA12309.1"/>
    <property type="molecule type" value="Genomic_DNA"/>
</dbReference>
<dbReference type="PIR" id="S69643">
    <property type="entry name" value="S69643"/>
</dbReference>
<dbReference type="RefSeq" id="NP_010764.1">
    <property type="nucleotide sequence ID" value="NM_001180784.1"/>
</dbReference>
<dbReference type="BioGRID" id="32528">
    <property type="interactions" value="42"/>
</dbReference>
<dbReference type="FunCoup" id="Q03362">
    <property type="interactions" value="38"/>
</dbReference>
<dbReference type="IntAct" id="Q03362">
    <property type="interactions" value="5"/>
</dbReference>
<dbReference type="MINT" id="Q03362"/>
<dbReference type="STRING" id="4932.YDR476C"/>
<dbReference type="GlyGen" id="Q03362">
    <property type="glycosylation" value="3 sites"/>
</dbReference>
<dbReference type="iPTMnet" id="Q03362"/>
<dbReference type="PaxDb" id="4932-YDR476C"/>
<dbReference type="PeptideAtlas" id="Q03362"/>
<dbReference type="EnsemblFungi" id="YDR476C_mRNA">
    <property type="protein sequence ID" value="YDR476C"/>
    <property type="gene ID" value="YDR476C"/>
</dbReference>
<dbReference type="GeneID" id="852087"/>
<dbReference type="KEGG" id="sce:YDR476C"/>
<dbReference type="AGR" id="SGD:S000002884"/>
<dbReference type="SGD" id="S000002884">
    <property type="gene designation" value="YDR476C"/>
</dbReference>
<dbReference type="VEuPathDB" id="FungiDB:YDR476C"/>
<dbReference type="eggNOG" id="ENOG502RZUI">
    <property type="taxonomic scope" value="Eukaryota"/>
</dbReference>
<dbReference type="HOGENOM" id="CLU_081019_1_0_1"/>
<dbReference type="InParanoid" id="Q03362"/>
<dbReference type="OMA" id="DFLIEWY"/>
<dbReference type="OrthoDB" id="5553410at2759"/>
<dbReference type="BioCyc" id="YEAST:G3O-30002-MONOMER"/>
<dbReference type="BioGRID-ORCS" id="852087">
    <property type="hits" value="2 hits in 10 CRISPR screens"/>
</dbReference>
<dbReference type="PRO" id="PR:Q03362"/>
<dbReference type="Proteomes" id="UP000002311">
    <property type="component" value="Chromosome IV"/>
</dbReference>
<dbReference type="RNAct" id="Q03362">
    <property type="molecule type" value="protein"/>
</dbReference>
<dbReference type="GO" id="GO:0005783">
    <property type="term" value="C:endoplasmic reticulum"/>
    <property type="evidence" value="ECO:0007005"/>
    <property type="project" value="SGD"/>
</dbReference>
<dbReference type="PANTHER" id="PTHR37783">
    <property type="entry name" value="MEMBRANE PROTEIN, PUTATIVE (AFU_ORTHOLOGUE AFUA_1G04315)-RELATED"/>
    <property type="match status" value="1"/>
</dbReference>
<dbReference type="PANTHER" id="PTHR37783:SF1">
    <property type="entry name" value="MEMBRANE PROTEIN, PUTATIVE (AFU_ORTHOLOGUE AFUA_1G04315)-RELATED"/>
    <property type="match status" value="1"/>
</dbReference>